<sequence length="299" mass="33661">MAIDIFQSLKNCVFDLQRADVQNYQQPLKQLARLLNSENLQSVNAHLTRNVELDTFLARSEDTESSMAGSAVLQWPDEPADILGLKLLLIEKMADDNNFSFNFCHTFFYDRNIIESIRKFTSSLVAPFVRDYQLYVENQHDPEPAVFRPVSRKIFIVHGHDNDALQSVARFISRIGLEEIILSERPDGSRTIIEKFEAESGDVSFAIVLMTPDDSGSALASESTRLRARQNVLYELGYFAGKLGRGKVLVLRKGDIEIPSDLAGVLYTELDEHGGWKRKLLSELAYAGVPFDKDKALSA</sequence>
<dbReference type="EMBL" id="AY205565">
    <property type="protein sequence ID" value="AAP42497.1"/>
    <property type="molecule type" value="Genomic_DNA"/>
</dbReference>
<dbReference type="EMBL" id="AP001918">
    <property type="protein sequence ID" value="BAA97909.1"/>
    <property type="molecule type" value="Genomic_DNA"/>
</dbReference>
<dbReference type="RefSeq" id="NP_061418.1">
    <property type="nucleotide sequence ID" value="NC_002483.1"/>
</dbReference>
<dbReference type="RefSeq" id="WP_000963206.1">
    <property type="nucleotide sequence ID" value="NZ_JACEFS010000051.1"/>
</dbReference>
<dbReference type="RefSeq" id="YP_002527517.1">
    <property type="nucleotide sequence ID" value="NC_011964.1"/>
</dbReference>
<dbReference type="SMR" id="Q9JMR6"/>
<dbReference type="KEGG" id="ecoc:C3026_24305"/>
<dbReference type="PRO" id="PR:Q9JMR6"/>
<dbReference type="GO" id="GO:0050135">
    <property type="term" value="F:NADP+ nucleosidase activity"/>
    <property type="evidence" value="ECO:0007669"/>
    <property type="project" value="InterPro"/>
</dbReference>
<dbReference type="InterPro" id="IPR019302">
    <property type="entry name" value="CAP12/PCTIR_TIR_dom"/>
</dbReference>
<dbReference type="InterPro" id="IPR014571">
    <property type="entry name" value="UCP032620"/>
</dbReference>
<dbReference type="Pfam" id="PF10137">
    <property type="entry name" value="CAP12-PCTIR_TIR"/>
    <property type="match status" value="1"/>
</dbReference>
<dbReference type="PIRSF" id="PIRSF032620">
    <property type="entry name" value="UCP032620"/>
    <property type="match status" value="1"/>
</dbReference>
<proteinExistence type="predicted"/>
<name>YUAY_ECOLI</name>
<geneLocation type="plasmid">
    <name>F</name>
</geneLocation>
<geneLocation type="plasmid">
    <name>p300</name>
</geneLocation>
<keyword id="KW-0614">Plasmid</keyword>
<accession>Q9JMR6</accession>
<accession>Q79LX2</accession>
<protein>
    <recommendedName>
        <fullName>Uncharacterized protein YuaY</fullName>
    </recommendedName>
</protein>
<organism>
    <name type="scientific">Escherichia coli (strain K12)</name>
    <dbReference type="NCBI Taxonomy" id="83333"/>
    <lineage>
        <taxon>Bacteria</taxon>
        <taxon>Pseudomonadati</taxon>
        <taxon>Pseudomonadota</taxon>
        <taxon>Gammaproteobacteria</taxon>
        <taxon>Enterobacterales</taxon>
        <taxon>Enterobacteriaceae</taxon>
        <taxon>Escherichia</taxon>
    </lineage>
</organism>
<feature type="chain" id="PRO_0000262309" description="Uncharacterized protein YuaY">
    <location>
        <begin position="1"/>
        <end position="299"/>
    </location>
</feature>
<gene>
    <name type="primary">yuaY</name>
    <name type="synonym">yebB</name>
    <name type="ordered locus">ECOK12F039</name>
</gene>
<reference key="1">
    <citation type="journal article" date="2003" name="Infect. Immun.">
        <title>Characterization of an iroBCDEN gene cluster on a transmissible plasmid of uropathogenic Escherichia coli: evidence for horizontal transfer of a chromosomal virulence factor.</title>
        <authorList>
            <person name="Sorsa J.L."/>
            <person name="Dufke S."/>
            <person name="Heesemann J."/>
            <person name="Schubert S."/>
        </authorList>
    </citation>
    <scope>NUCLEOTIDE SEQUENCE [GENOMIC DNA]</scope>
    <source>
        <strain>HE300 / UPEC</strain>
        <plasmid>p300</plasmid>
    </source>
</reference>
<reference key="2">
    <citation type="submission" date="2000-04" db="EMBL/GenBank/DDBJ databases">
        <title>Complete nucleotide sequence of the F plasmid: its implications for organization and diversification of plasmid genomes.</title>
        <authorList>
            <person name="Shimizu H."/>
            <person name="Saitoh Y."/>
            <person name="Suda Y."/>
            <person name="Uehara K."/>
            <person name="Sampei G."/>
            <person name="Mizobuchi K."/>
        </authorList>
    </citation>
    <scope>NUCLEOTIDE SEQUENCE [LARGE SCALE GENOMIC DNA]</scope>
    <source>
        <strain>K12 / CR63</strain>
        <plasmid>F</plasmid>
    </source>
</reference>